<protein>
    <recommendedName>
        <fullName evidence="1">Ribosomal RNA small subunit methyltransferase G</fullName>
        <ecNumber evidence="1">2.1.1.-</ecNumber>
    </recommendedName>
    <alternativeName>
        <fullName evidence="1">16S rRNA 7-methylguanosine methyltransferase</fullName>
        <shortName evidence="1">16S rRNA m7G methyltransferase</shortName>
    </alternativeName>
</protein>
<reference key="1">
    <citation type="journal article" date="2006" name="J. Bacteriol.">
        <title>Living with genome instability: the adaptation of phytoplasmas to diverse environments of their insect and plant hosts.</title>
        <authorList>
            <person name="Bai X."/>
            <person name="Zhang J."/>
            <person name="Ewing A."/>
            <person name="Miller S.A."/>
            <person name="Jancso Radek A."/>
            <person name="Shevchenko D.V."/>
            <person name="Tsukerman K."/>
            <person name="Walunas T."/>
            <person name="Lapidus A."/>
            <person name="Campbell J.W."/>
            <person name="Hogenhout S.A."/>
        </authorList>
    </citation>
    <scope>NUCLEOTIDE SEQUENCE [LARGE SCALE GENOMIC DNA]</scope>
    <source>
        <strain>AYWB</strain>
    </source>
</reference>
<sequence length="212" mass="24833">MLYFESLKDKFKLNKKQLNKFVFYYEFLKKENQKMNLTSLISLSDVCYKHFYDSLILKEIFDFNNVTNLCDVGSGAGFPSFPLKILYPHLKIIIIESSLKKINFLKQLASHLELDNVCFFHKRVEQHDIAKNGSYDFVVARALARLEIILKWCVPLVKKRGYFIAMKGKNFQQELEASKKIIKQMKVKLVSAKVFELPMQLGTRTNLLFQTE</sequence>
<dbReference type="EC" id="2.1.1.-" evidence="1"/>
<dbReference type="EMBL" id="CP000061">
    <property type="protein sequence ID" value="ABC65571.1"/>
    <property type="molecule type" value="Genomic_DNA"/>
</dbReference>
<dbReference type="RefSeq" id="WP_011412735.1">
    <property type="nucleotide sequence ID" value="NC_007716.1"/>
</dbReference>
<dbReference type="SMR" id="Q2NJ22"/>
<dbReference type="STRING" id="322098.AYWB_454"/>
<dbReference type="KEGG" id="ayw:AYWB_454"/>
<dbReference type="eggNOG" id="COG0357">
    <property type="taxonomic scope" value="Bacteria"/>
</dbReference>
<dbReference type="HOGENOM" id="CLU_065341_0_0_14"/>
<dbReference type="OrthoDB" id="9808773at2"/>
<dbReference type="PhylomeDB" id="Q2NJ22"/>
<dbReference type="Proteomes" id="UP000001934">
    <property type="component" value="Chromosome"/>
</dbReference>
<dbReference type="GO" id="GO:0005829">
    <property type="term" value="C:cytosol"/>
    <property type="evidence" value="ECO:0007669"/>
    <property type="project" value="TreeGrafter"/>
</dbReference>
<dbReference type="GO" id="GO:0070043">
    <property type="term" value="F:rRNA (guanine-N7-)-methyltransferase activity"/>
    <property type="evidence" value="ECO:0007669"/>
    <property type="project" value="UniProtKB-UniRule"/>
</dbReference>
<dbReference type="CDD" id="cd02440">
    <property type="entry name" value="AdoMet_MTases"/>
    <property type="match status" value="1"/>
</dbReference>
<dbReference type="Gene3D" id="3.40.50.150">
    <property type="entry name" value="Vaccinia Virus protein VP39"/>
    <property type="match status" value="1"/>
</dbReference>
<dbReference type="HAMAP" id="MF_00074">
    <property type="entry name" value="16SrRNA_methyltr_G"/>
    <property type="match status" value="1"/>
</dbReference>
<dbReference type="InterPro" id="IPR003682">
    <property type="entry name" value="rRNA_ssu_MeTfrase_G"/>
</dbReference>
<dbReference type="InterPro" id="IPR029063">
    <property type="entry name" value="SAM-dependent_MTases_sf"/>
</dbReference>
<dbReference type="NCBIfam" id="TIGR00138">
    <property type="entry name" value="rsmG_gidB"/>
    <property type="match status" value="1"/>
</dbReference>
<dbReference type="PANTHER" id="PTHR31760">
    <property type="entry name" value="S-ADENOSYL-L-METHIONINE-DEPENDENT METHYLTRANSFERASES SUPERFAMILY PROTEIN"/>
    <property type="match status" value="1"/>
</dbReference>
<dbReference type="PANTHER" id="PTHR31760:SF0">
    <property type="entry name" value="S-ADENOSYL-L-METHIONINE-DEPENDENT METHYLTRANSFERASES SUPERFAMILY PROTEIN"/>
    <property type="match status" value="1"/>
</dbReference>
<dbReference type="Pfam" id="PF02527">
    <property type="entry name" value="GidB"/>
    <property type="match status" value="1"/>
</dbReference>
<dbReference type="PIRSF" id="PIRSF003078">
    <property type="entry name" value="GidB"/>
    <property type="match status" value="1"/>
</dbReference>
<dbReference type="SUPFAM" id="SSF53335">
    <property type="entry name" value="S-adenosyl-L-methionine-dependent methyltransferases"/>
    <property type="match status" value="1"/>
</dbReference>
<keyword id="KW-0963">Cytoplasm</keyword>
<keyword id="KW-0489">Methyltransferase</keyword>
<keyword id="KW-0698">rRNA processing</keyword>
<keyword id="KW-0949">S-adenosyl-L-methionine</keyword>
<keyword id="KW-0808">Transferase</keyword>
<feature type="chain" id="PRO_1000010118" description="Ribosomal RNA small subunit methyltransferase G">
    <location>
        <begin position="1"/>
        <end position="212"/>
    </location>
</feature>
<feature type="binding site" evidence="1">
    <location>
        <position position="73"/>
    </location>
    <ligand>
        <name>S-adenosyl-L-methionine</name>
        <dbReference type="ChEBI" id="CHEBI:59789"/>
    </ligand>
</feature>
<feature type="binding site" evidence="1">
    <location>
        <position position="78"/>
    </location>
    <ligand>
        <name>S-adenosyl-L-methionine</name>
        <dbReference type="ChEBI" id="CHEBI:59789"/>
    </ligand>
</feature>
<feature type="binding site" evidence="1">
    <location>
        <begin position="96"/>
        <end position="98"/>
    </location>
    <ligand>
        <name>S-adenosyl-L-methionine</name>
        <dbReference type="ChEBI" id="CHEBI:59789"/>
    </ligand>
</feature>
<feature type="binding site" evidence="1">
    <location>
        <begin position="124"/>
        <end position="125"/>
    </location>
    <ligand>
        <name>S-adenosyl-L-methionine</name>
        <dbReference type="ChEBI" id="CHEBI:59789"/>
    </ligand>
</feature>
<feature type="binding site" evidence="1">
    <location>
        <position position="141"/>
    </location>
    <ligand>
        <name>S-adenosyl-L-methionine</name>
        <dbReference type="ChEBI" id="CHEBI:59789"/>
    </ligand>
</feature>
<comment type="function">
    <text evidence="1">Specifically methylates the N7 position of a guanine in 16S rRNA.</text>
</comment>
<comment type="subcellular location">
    <subcellularLocation>
        <location evidence="1">Cytoplasm</location>
    </subcellularLocation>
</comment>
<comment type="similarity">
    <text evidence="1">Belongs to the methyltransferase superfamily. RNA methyltransferase RsmG family.</text>
</comment>
<proteinExistence type="inferred from homology"/>
<evidence type="ECO:0000255" key="1">
    <source>
        <dbReference type="HAMAP-Rule" id="MF_00074"/>
    </source>
</evidence>
<organism>
    <name type="scientific">Aster yellows witches'-broom phytoplasma (strain AYWB)</name>
    <dbReference type="NCBI Taxonomy" id="322098"/>
    <lineage>
        <taxon>Bacteria</taxon>
        <taxon>Bacillati</taxon>
        <taxon>Mycoplasmatota</taxon>
        <taxon>Mollicutes</taxon>
        <taxon>Acholeplasmatales</taxon>
        <taxon>Acholeplasmataceae</taxon>
        <taxon>Candidatus Phytoplasma</taxon>
        <taxon>16SrI (Aster yellows group)</taxon>
    </lineage>
</organism>
<gene>
    <name evidence="1" type="primary">rsmG</name>
    <name type="ordered locus">AYWB_454</name>
</gene>
<name>RSMG_AYWBP</name>
<accession>Q2NJ22</accession>